<organism>
    <name type="scientific">Escherichia coli O157:H7 (strain EC4115 / EHEC)</name>
    <dbReference type="NCBI Taxonomy" id="444450"/>
    <lineage>
        <taxon>Bacteria</taxon>
        <taxon>Pseudomonadati</taxon>
        <taxon>Pseudomonadota</taxon>
        <taxon>Gammaproteobacteria</taxon>
        <taxon>Enterobacterales</taxon>
        <taxon>Enterobacteriaceae</taxon>
        <taxon>Escherichia</taxon>
    </lineage>
</organism>
<proteinExistence type="inferred from homology"/>
<protein>
    <recommendedName>
        <fullName evidence="1">Nucleoid-associated protein YejK</fullName>
    </recommendedName>
</protein>
<gene>
    <name evidence="1" type="primary">yejK</name>
    <name type="ordered locus">ECH74115_3324</name>
</gene>
<accession>B5YWX9</accession>
<comment type="subcellular location">
    <subcellularLocation>
        <location evidence="1">Cytoplasm</location>
        <location evidence="1">Nucleoid</location>
    </subcellularLocation>
</comment>
<comment type="similarity">
    <text evidence="1">Belongs to the YejK family.</text>
</comment>
<dbReference type="EMBL" id="CP001164">
    <property type="protein sequence ID" value="ACI35549.1"/>
    <property type="molecule type" value="Genomic_DNA"/>
</dbReference>
<dbReference type="RefSeq" id="WP_000050789.1">
    <property type="nucleotide sequence ID" value="NC_011353.1"/>
</dbReference>
<dbReference type="SMR" id="B5YWX9"/>
<dbReference type="GeneID" id="75206440"/>
<dbReference type="KEGG" id="ecf:ECH74115_3324"/>
<dbReference type="HOGENOM" id="CLU_063050_0_1_6"/>
<dbReference type="GO" id="GO:0043590">
    <property type="term" value="C:bacterial nucleoid"/>
    <property type="evidence" value="ECO:0007669"/>
    <property type="project" value="TreeGrafter"/>
</dbReference>
<dbReference type="GO" id="GO:0005737">
    <property type="term" value="C:cytoplasm"/>
    <property type="evidence" value="ECO:0007669"/>
    <property type="project" value="UniProtKB-UniRule"/>
</dbReference>
<dbReference type="GO" id="GO:0003690">
    <property type="term" value="F:double-stranded DNA binding"/>
    <property type="evidence" value="ECO:0007669"/>
    <property type="project" value="TreeGrafter"/>
</dbReference>
<dbReference type="GO" id="GO:0003727">
    <property type="term" value="F:single-stranded RNA binding"/>
    <property type="evidence" value="ECO:0007669"/>
    <property type="project" value="TreeGrafter"/>
</dbReference>
<dbReference type="HAMAP" id="MF_00730">
    <property type="entry name" value="NdpA"/>
    <property type="match status" value="1"/>
</dbReference>
<dbReference type="InterPro" id="IPR007358">
    <property type="entry name" value="Nucleoid_associated_NdpA"/>
</dbReference>
<dbReference type="NCBIfam" id="NF001557">
    <property type="entry name" value="PRK00378.1"/>
    <property type="match status" value="1"/>
</dbReference>
<dbReference type="PANTHER" id="PTHR38772">
    <property type="match status" value="1"/>
</dbReference>
<dbReference type="PANTHER" id="PTHR38772:SF1">
    <property type="entry name" value="NUCLEOID-ASSOCIATED PROTEIN YEJK"/>
    <property type="match status" value="1"/>
</dbReference>
<dbReference type="Pfam" id="PF04245">
    <property type="entry name" value="NA37"/>
    <property type="match status" value="1"/>
</dbReference>
<evidence type="ECO:0000255" key="1">
    <source>
        <dbReference type="HAMAP-Rule" id="MF_00730"/>
    </source>
</evidence>
<reference key="1">
    <citation type="journal article" date="2011" name="Proc. Natl. Acad. Sci. U.S.A.">
        <title>Genomic anatomy of Escherichia coli O157:H7 outbreaks.</title>
        <authorList>
            <person name="Eppinger M."/>
            <person name="Mammel M.K."/>
            <person name="Leclerc J.E."/>
            <person name="Ravel J."/>
            <person name="Cebula T.A."/>
        </authorList>
    </citation>
    <scope>NUCLEOTIDE SEQUENCE [LARGE SCALE GENOMIC DNA]</scope>
    <source>
        <strain>EC4115 / EHEC</strain>
    </source>
</reference>
<name>NDPA_ECO5E</name>
<keyword id="KW-0963">Cytoplasm</keyword>
<feature type="chain" id="PRO_1000191558" description="Nucleoid-associated protein YejK">
    <location>
        <begin position="1"/>
        <end position="335"/>
    </location>
</feature>
<sequence length="335" mass="37823">MSLDINQIALHQLIKRDEQNLELVLRDSLLEPTETVVEMVAELHRVYSAKNKAYGLFSEESELAQTLRLQRQGEEDFLAFSRAATGRLRDELAKYPFADGGFVLFCHYRYLAVEYLLVAVLSNLSSMRVNENLDINPTHYLDINHADIVARIDLTEWETNPESTRYLTFLKGRVGRKVADFFMDFLGASEGLNAKAQNRGLLQAVDDFTAEAQLDKAERQNVRQQVYSYCNEQLQAGEEIELESLSKELAGVSEVSFTEFAAEKGYELEESFPADRSTLRQLTKFAGSGGGLTINFDAMLLGERIFWDPATDTLTIKGTPPNLRDQLQRRTSGGN</sequence>